<reference key="1">
    <citation type="journal article" date="2001" name="Science">
        <title>Complete genome sequence of a virulent isolate of Streptococcus pneumoniae.</title>
        <authorList>
            <person name="Tettelin H."/>
            <person name="Nelson K.E."/>
            <person name="Paulsen I.T."/>
            <person name="Eisen J.A."/>
            <person name="Read T.D."/>
            <person name="Peterson S.N."/>
            <person name="Heidelberg J.F."/>
            <person name="DeBoy R.T."/>
            <person name="Haft D.H."/>
            <person name="Dodson R.J."/>
            <person name="Durkin A.S."/>
            <person name="Gwinn M.L."/>
            <person name="Kolonay J.F."/>
            <person name="Nelson W.C."/>
            <person name="Peterson J.D."/>
            <person name="Umayam L.A."/>
            <person name="White O."/>
            <person name="Salzberg S.L."/>
            <person name="Lewis M.R."/>
            <person name="Radune D."/>
            <person name="Holtzapple E.K."/>
            <person name="Khouri H.M."/>
            <person name="Wolf A.M."/>
            <person name="Utterback T.R."/>
            <person name="Hansen C.L."/>
            <person name="McDonald L.A."/>
            <person name="Feldblyum T.V."/>
            <person name="Angiuoli S.V."/>
            <person name="Dickinson T."/>
            <person name="Hickey E.K."/>
            <person name="Holt I.E."/>
            <person name="Loftus B.J."/>
            <person name="Yang F."/>
            <person name="Smith H.O."/>
            <person name="Venter J.C."/>
            <person name="Dougherty B.A."/>
            <person name="Morrison D.A."/>
            <person name="Hollingshead S.K."/>
            <person name="Fraser C.M."/>
        </authorList>
    </citation>
    <scope>NUCLEOTIDE SEQUENCE [LARGE SCALE GENOMIC DNA]</scope>
    <source>
        <strain>ATCC BAA-334 / TIGR4</strain>
    </source>
</reference>
<keyword id="KW-0560">Oxidoreductase</keyword>
<keyword id="KW-1185">Reference proteome</keyword>
<keyword id="KW-0819">tRNA processing</keyword>
<dbReference type="EC" id="1.14.-.-" evidence="1"/>
<dbReference type="EMBL" id="AE005672">
    <property type="protein sequence ID" value="AAK74282.1"/>
    <property type="molecule type" value="Genomic_DNA"/>
</dbReference>
<dbReference type="PIR" id="A95011">
    <property type="entry name" value="A95011"/>
</dbReference>
<dbReference type="RefSeq" id="WP_001030031.1">
    <property type="nucleotide sequence ID" value="NZ_CP155539.1"/>
</dbReference>
<dbReference type="SMR" id="P67330"/>
<dbReference type="IntAct" id="P67330">
    <property type="interactions" value="1"/>
</dbReference>
<dbReference type="PaxDb" id="170187-SP_0095"/>
<dbReference type="EnsemblBacteria" id="AAK74282">
    <property type="protein sequence ID" value="AAK74282"/>
    <property type="gene ID" value="SP_0095"/>
</dbReference>
<dbReference type="KEGG" id="spn:SP_0095"/>
<dbReference type="eggNOG" id="COG1054">
    <property type="taxonomic scope" value="Bacteria"/>
</dbReference>
<dbReference type="PhylomeDB" id="P67330"/>
<dbReference type="BioCyc" id="SPNE170187:G1FZB-97-MONOMER"/>
<dbReference type="Proteomes" id="UP000000585">
    <property type="component" value="Chromosome"/>
</dbReference>
<dbReference type="GO" id="GO:0016705">
    <property type="term" value="F:oxidoreductase activity, acting on paired donors, with incorporation or reduction of molecular oxygen"/>
    <property type="evidence" value="ECO:0007669"/>
    <property type="project" value="UniProtKB-UniRule"/>
</dbReference>
<dbReference type="GO" id="GO:0006400">
    <property type="term" value="P:tRNA modification"/>
    <property type="evidence" value="ECO:0007669"/>
    <property type="project" value="UniProtKB-UniRule"/>
</dbReference>
<dbReference type="CDD" id="cd01518">
    <property type="entry name" value="RHOD_YceA"/>
    <property type="match status" value="1"/>
</dbReference>
<dbReference type="Gene3D" id="3.30.70.100">
    <property type="match status" value="1"/>
</dbReference>
<dbReference type="Gene3D" id="3.40.250.10">
    <property type="entry name" value="Rhodanese-like domain"/>
    <property type="match status" value="1"/>
</dbReference>
<dbReference type="HAMAP" id="MF_00469">
    <property type="entry name" value="TrhO"/>
    <property type="match status" value="1"/>
</dbReference>
<dbReference type="InterPro" id="IPR001763">
    <property type="entry name" value="Rhodanese-like_dom"/>
</dbReference>
<dbReference type="InterPro" id="IPR036873">
    <property type="entry name" value="Rhodanese-like_dom_sf"/>
</dbReference>
<dbReference type="InterPro" id="IPR022111">
    <property type="entry name" value="Rhodanese_C"/>
</dbReference>
<dbReference type="InterPro" id="IPR020936">
    <property type="entry name" value="TrhO"/>
</dbReference>
<dbReference type="InterPro" id="IPR040503">
    <property type="entry name" value="TRHO_N"/>
</dbReference>
<dbReference type="NCBIfam" id="NF001135">
    <property type="entry name" value="PRK00142.1-3"/>
    <property type="match status" value="1"/>
</dbReference>
<dbReference type="NCBIfam" id="NF001137">
    <property type="entry name" value="PRK00142.1-5"/>
    <property type="match status" value="1"/>
</dbReference>
<dbReference type="PANTHER" id="PTHR43268:SF3">
    <property type="entry name" value="RHODANESE-LIKE DOMAIN-CONTAINING PROTEIN 7-RELATED"/>
    <property type="match status" value="1"/>
</dbReference>
<dbReference type="PANTHER" id="PTHR43268">
    <property type="entry name" value="THIOSULFATE SULFURTRANSFERASE/RHODANESE-LIKE DOMAIN-CONTAINING PROTEIN 2"/>
    <property type="match status" value="1"/>
</dbReference>
<dbReference type="Pfam" id="PF00581">
    <property type="entry name" value="Rhodanese"/>
    <property type="match status" value="1"/>
</dbReference>
<dbReference type="Pfam" id="PF12368">
    <property type="entry name" value="Rhodanese_C"/>
    <property type="match status" value="1"/>
</dbReference>
<dbReference type="Pfam" id="PF17773">
    <property type="entry name" value="UPF0176_N"/>
    <property type="match status" value="1"/>
</dbReference>
<dbReference type="SMART" id="SM00450">
    <property type="entry name" value="RHOD"/>
    <property type="match status" value="1"/>
</dbReference>
<dbReference type="SUPFAM" id="SSF52821">
    <property type="entry name" value="Rhodanese/Cell cycle control phosphatase"/>
    <property type="match status" value="1"/>
</dbReference>
<dbReference type="PROSITE" id="PS50206">
    <property type="entry name" value="RHODANESE_3"/>
    <property type="match status" value="1"/>
</dbReference>
<evidence type="ECO:0000255" key="1">
    <source>
        <dbReference type="HAMAP-Rule" id="MF_00469"/>
    </source>
</evidence>
<accession>P67330</accession>
<accession>Q97T60</accession>
<gene>
    <name evidence="1" type="primary">trhO</name>
    <name type="ordered locus">SP_0095</name>
</gene>
<proteinExistence type="evidence at protein level"/>
<organism>
    <name type="scientific">Streptococcus pneumoniae serotype 4 (strain ATCC BAA-334 / TIGR4)</name>
    <dbReference type="NCBI Taxonomy" id="170187"/>
    <lineage>
        <taxon>Bacteria</taxon>
        <taxon>Bacillati</taxon>
        <taxon>Bacillota</taxon>
        <taxon>Bacilli</taxon>
        <taxon>Lactobacillales</taxon>
        <taxon>Streptococcaceae</taxon>
        <taxon>Streptococcus</taxon>
    </lineage>
</organism>
<sequence>MAKDIRVLLYYLYTPIENAEQFAADHLAFCKSIGLKGRILVADEGINGTVSGDYETTQKYMDYVHSLPGMEELWFKIDEENEQAFKKMFVRYKKEIVHLGLEDNDFDNDINPLETTGAYLSPKEFKEALLDKDTVVLDTRNDYEYDLGHFRGAIRPDIRNFRELPQWVRDNKEKFMDKRVVVYCTGGVRCEKFSGWMVREGYKDVGQLHGGIATYGKDPEVQGELWDGKMYVFDERIAVDVNHVNPTIVGKDWFDGTPCERYVNCGNPFCNRRILTSEENEDKYLRGCSHECRVHPRNRYVSKNELTQAEVIERLAAIGESLDQAATV</sequence>
<protein>
    <recommendedName>
        <fullName evidence="1">tRNA uridine(34) hydroxylase</fullName>
        <ecNumber evidence="1">1.14.-.-</ecNumber>
    </recommendedName>
    <alternativeName>
        <fullName evidence="1">tRNA hydroxylation protein O</fullName>
    </alternativeName>
</protein>
<feature type="chain" id="PRO_0000161523" description="tRNA uridine(34) hydroxylase">
    <location>
        <begin position="1"/>
        <end position="328"/>
    </location>
</feature>
<feature type="domain" description="Rhodanese" evidence="1">
    <location>
        <begin position="130"/>
        <end position="224"/>
    </location>
</feature>
<feature type="active site" description="Cysteine persulfide intermediate" evidence="1">
    <location>
        <position position="184"/>
    </location>
</feature>
<comment type="function">
    <text evidence="1">Catalyzes oxygen-dependent 5-hydroxyuridine (ho5U) modification at position 34 in tRNAs.</text>
</comment>
<comment type="catalytic activity">
    <reaction evidence="1">
        <text>uridine(34) in tRNA + AH2 + O2 = 5-hydroxyuridine(34) in tRNA + A + H2O</text>
        <dbReference type="Rhea" id="RHEA:64224"/>
        <dbReference type="Rhea" id="RHEA-COMP:11727"/>
        <dbReference type="Rhea" id="RHEA-COMP:13381"/>
        <dbReference type="ChEBI" id="CHEBI:13193"/>
        <dbReference type="ChEBI" id="CHEBI:15377"/>
        <dbReference type="ChEBI" id="CHEBI:15379"/>
        <dbReference type="ChEBI" id="CHEBI:17499"/>
        <dbReference type="ChEBI" id="CHEBI:65315"/>
        <dbReference type="ChEBI" id="CHEBI:136877"/>
    </reaction>
</comment>
<comment type="interaction">
    <interactant intactId="EBI-6472913">
        <id>P67330</id>
    </interactant>
    <interactant intactId="EBI-6472917">
        <id>A0A0H2UQB1</id>
        <label>SP_1692</label>
    </interactant>
    <organismsDiffer>false</organismsDiffer>
    <experiments>3</experiments>
</comment>
<comment type="similarity">
    <text evidence="1">Belongs to the TrhO family.</text>
</comment>
<name>TRHO_STRPN</name>